<sequence length="92" mass="10706">MTTKKAYMYVLECADKTLYTGYTTDLKKRLATHNAGKGAKYTRYRLPVSLLYYEVFDSKEAAMSAEALFKKRKTRSQKLAYIATHQKEKKNH</sequence>
<name>Y1222_STRPD</name>
<organism>
    <name type="scientific">Streptococcus pyogenes serotype M2 (strain MGAS10270)</name>
    <dbReference type="NCBI Taxonomy" id="370552"/>
    <lineage>
        <taxon>Bacteria</taxon>
        <taxon>Bacillati</taxon>
        <taxon>Bacillota</taxon>
        <taxon>Bacilli</taxon>
        <taxon>Lactobacillales</taxon>
        <taxon>Streptococcaceae</taxon>
        <taxon>Streptococcus</taxon>
    </lineage>
</organism>
<comment type="similarity">
    <text evidence="2">Belongs to the UPF0213 family.</text>
</comment>
<accession>Q1JG57</accession>
<dbReference type="EMBL" id="CP000260">
    <property type="protein sequence ID" value="ABF34287.1"/>
    <property type="molecule type" value="Genomic_DNA"/>
</dbReference>
<dbReference type="SMR" id="Q1JG57"/>
<dbReference type="KEGG" id="sph:MGAS10270_Spy1222"/>
<dbReference type="HOGENOM" id="CLU_135650_0_3_9"/>
<dbReference type="Proteomes" id="UP000002436">
    <property type="component" value="Chromosome"/>
</dbReference>
<dbReference type="CDD" id="cd10456">
    <property type="entry name" value="GIY-YIG_UPF0213"/>
    <property type="match status" value="1"/>
</dbReference>
<dbReference type="Gene3D" id="3.40.1440.10">
    <property type="entry name" value="GIY-YIG endonuclease"/>
    <property type="match status" value="1"/>
</dbReference>
<dbReference type="InterPro" id="IPR000305">
    <property type="entry name" value="GIY-YIG_endonuc"/>
</dbReference>
<dbReference type="InterPro" id="IPR035901">
    <property type="entry name" value="GIY-YIG_endonuc_sf"/>
</dbReference>
<dbReference type="InterPro" id="IPR050190">
    <property type="entry name" value="UPF0213_domain"/>
</dbReference>
<dbReference type="PANTHER" id="PTHR34477">
    <property type="entry name" value="UPF0213 PROTEIN YHBQ"/>
    <property type="match status" value="1"/>
</dbReference>
<dbReference type="PANTHER" id="PTHR34477:SF1">
    <property type="entry name" value="UPF0213 PROTEIN YHBQ"/>
    <property type="match status" value="1"/>
</dbReference>
<dbReference type="Pfam" id="PF01541">
    <property type="entry name" value="GIY-YIG"/>
    <property type="match status" value="1"/>
</dbReference>
<dbReference type="SUPFAM" id="SSF82771">
    <property type="entry name" value="GIY-YIG endonuclease"/>
    <property type="match status" value="1"/>
</dbReference>
<dbReference type="PROSITE" id="PS50164">
    <property type="entry name" value="GIY_YIG"/>
    <property type="match status" value="1"/>
</dbReference>
<evidence type="ECO:0000255" key="1">
    <source>
        <dbReference type="PROSITE-ProRule" id="PRU00977"/>
    </source>
</evidence>
<evidence type="ECO:0000305" key="2"/>
<proteinExistence type="inferred from homology"/>
<protein>
    <recommendedName>
        <fullName>UPF0213 protein MGAS10270_Spy1222</fullName>
    </recommendedName>
</protein>
<reference key="1">
    <citation type="journal article" date="2006" name="Proc. Natl. Acad. Sci. U.S.A.">
        <title>Molecular genetic anatomy of inter- and intraserotype variation in the human bacterial pathogen group A Streptococcus.</title>
        <authorList>
            <person name="Beres S.B."/>
            <person name="Richter E.W."/>
            <person name="Nagiec M.J."/>
            <person name="Sumby P."/>
            <person name="Porcella S.F."/>
            <person name="DeLeo F.R."/>
            <person name="Musser J.M."/>
        </authorList>
    </citation>
    <scope>NUCLEOTIDE SEQUENCE [LARGE SCALE GENOMIC DNA]</scope>
    <source>
        <strain>MGAS10270</strain>
    </source>
</reference>
<gene>
    <name type="ordered locus">MGAS10270_Spy1222</name>
</gene>
<feature type="chain" id="PRO_1000063693" description="UPF0213 protein MGAS10270_Spy1222">
    <location>
        <begin position="1"/>
        <end position="92"/>
    </location>
</feature>
<feature type="domain" description="GIY-YIG" evidence="1">
    <location>
        <begin position="4"/>
        <end position="80"/>
    </location>
</feature>